<feature type="chain" id="PRO_1000148006" description="Protein SlyX">
    <location>
        <begin position="1"/>
        <end position="72"/>
    </location>
</feature>
<feature type="region of interest" description="Disordered" evidence="2">
    <location>
        <begin position="52"/>
        <end position="72"/>
    </location>
</feature>
<feature type="compositionally biased region" description="Polar residues" evidence="2">
    <location>
        <begin position="55"/>
        <end position="65"/>
    </location>
</feature>
<proteinExistence type="inferred from homology"/>
<keyword id="KW-1185">Reference proteome</keyword>
<evidence type="ECO:0000255" key="1">
    <source>
        <dbReference type="HAMAP-Rule" id="MF_00715"/>
    </source>
</evidence>
<evidence type="ECO:0000256" key="2">
    <source>
        <dbReference type="SAM" id="MobiDB-lite"/>
    </source>
</evidence>
<protein>
    <recommendedName>
        <fullName evidence="1">Protein SlyX</fullName>
    </recommendedName>
</protein>
<organism>
    <name type="scientific">Escherichia coli (strain 55989 / EAEC)</name>
    <dbReference type="NCBI Taxonomy" id="585055"/>
    <lineage>
        <taxon>Bacteria</taxon>
        <taxon>Pseudomonadati</taxon>
        <taxon>Pseudomonadota</taxon>
        <taxon>Gammaproteobacteria</taxon>
        <taxon>Enterobacterales</taxon>
        <taxon>Enterobacteriaceae</taxon>
        <taxon>Escherichia</taxon>
    </lineage>
</organism>
<comment type="similarity">
    <text evidence="1">Belongs to the SlyX family.</text>
</comment>
<sequence>MQDLSLEARLAELESRLAFQEITIEELNVTVTAHEMEMAKLRDHLRLLTEKLKASQPSNIASQAEETPPPHY</sequence>
<reference key="1">
    <citation type="journal article" date="2009" name="PLoS Genet.">
        <title>Organised genome dynamics in the Escherichia coli species results in highly diverse adaptive paths.</title>
        <authorList>
            <person name="Touchon M."/>
            <person name="Hoede C."/>
            <person name="Tenaillon O."/>
            <person name="Barbe V."/>
            <person name="Baeriswyl S."/>
            <person name="Bidet P."/>
            <person name="Bingen E."/>
            <person name="Bonacorsi S."/>
            <person name="Bouchier C."/>
            <person name="Bouvet O."/>
            <person name="Calteau A."/>
            <person name="Chiapello H."/>
            <person name="Clermont O."/>
            <person name="Cruveiller S."/>
            <person name="Danchin A."/>
            <person name="Diard M."/>
            <person name="Dossat C."/>
            <person name="Karoui M.E."/>
            <person name="Frapy E."/>
            <person name="Garry L."/>
            <person name="Ghigo J.M."/>
            <person name="Gilles A.M."/>
            <person name="Johnson J."/>
            <person name="Le Bouguenec C."/>
            <person name="Lescat M."/>
            <person name="Mangenot S."/>
            <person name="Martinez-Jehanne V."/>
            <person name="Matic I."/>
            <person name="Nassif X."/>
            <person name="Oztas S."/>
            <person name="Petit M.A."/>
            <person name="Pichon C."/>
            <person name="Rouy Z."/>
            <person name="Ruf C.S."/>
            <person name="Schneider D."/>
            <person name="Tourret J."/>
            <person name="Vacherie B."/>
            <person name="Vallenet D."/>
            <person name="Medigue C."/>
            <person name="Rocha E.P.C."/>
            <person name="Denamur E."/>
        </authorList>
    </citation>
    <scope>NUCLEOTIDE SEQUENCE [LARGE SCALE GENOMIC DNA]</scope>
    <source>
        <strain>55989 / EAEC</strain>
    </source>
</reference>
<dbReference type="EMBL" id="CU928145">
    <property type="protein sequence ID" value="CAV00065.1"/>
    <property type="molecule type" value="Genomic_DNA"/>
</dbReference>
<dbReference type="RefSeq" id="WP_001153615.1">
    <property type="nucleotide sequence ID" value="NZ_CP028304.1"/>
</dbReference>
<dbReference type="SMR" id="B7L4M4"/>
<dbReference type="KEGG" id="eck:EC55989_3751"/>
<dbReference type="HOGENOM" id="CLU_180796_4_2_6"/>
<dbReference type="Proteomes" id="UP000000746">
    <property type="component" value="Chromosome"/>
</dbReference>
<dbReference type="Gene3D" id="1.20.5.300">
    <property type="match status" value="1"/>
</dbReference>
<dbReference type="HAMAP" id="MF_00715">
    <property type="entry name" value="SlyX"/>
    <property type="match status" value="1"/>
</dbReference>
<dbReference type="InterPro" id="IPR007236">
    <property type="entry name" value="SlyX"/>
</dbReference>
<dbReference type="NCBIfam" id="NF002750">
    <property type="entry name" value="PRK02793.1"/>
    <property type="match status" value="1"/>
</dbReference>
<dbReference type="PANTHER" id="PTHR36508">
    <property type="entry name" value="PROTEIN SLYX"/>
    <property type="match status" value="1"/>
</dbReference>
<dbReference type="PANTHER" id="PTHR36508:SF1">
    <property type="entry name" value="PROTEIN SLYX"/>
    <property type="match status" value="1"/>
</dbReference>
<dbReference type="Pfam" id="PF04102">
    <property type="entry name" value="SlyX"/>
    <property type="match status" value="1"/>
</dbReference>
<gene>
    <name evidence="1" type="primary">slyX</name>
    <name type="ordered locus">EC55989_3751</name>
</gene>
<accession>B7L4M4</accession>
<name>SLYX_ECO55</name>